<protein>
    <recommendedName>
        <fullName>Voltage-gated ClC-type chloride channel ClcB</fullName>
    </recommendedName>
</protein>
<accession>Q8ZPK5</accession>
<keyword id="KW-0997">Cell inner membrane</keyword>
<keyword id="KW-1003">Cell membrane</keyword>
<keyword id="KW-0868">Chloride</keyword>
<keyword id="KW-0869">Chloride channel</keyword>
<keyword id="KW-0407">Ion channel</keyword>
<keyword id="KW-0406">Ion transport</keyword>
<keyword id="KW-0472">Membrane</keyword>
<keyword id="KW-1185">Reference proteome</keyword>
<keyword id="KW-0812">Transmembrane</keyword>
<keyword id="KW-1133">Transmembrane helix</keyword>
<keyword id="KW-0813">Transport</keyword>
<keyword id="KW-0851">Voltage-gated channel</keyword>
<name>CLCB_SALTY</name>
<comment type="function">
    <text>Probably acts as an electrical shunt for an outwardly-directed proton pump that is linked to amino acid decarboxylation, as part of the extreme acid resistance (XAR) response.</text>
</comment>
<comment type="subcellular location">
    <subcellularLocation>
        <location evidence="1">Cell inner membrane</location>
        <topology evidence="1">Multi-pass membrane protein</topology>
    </subcellularLocation>
</comment>
<comment type="similarity">
    <text evidence="3">Belongs to the chloride channel (TC 2.A.49) family. ClcB subfamily.</text>
</comment>
<comment type="sequence caution" evidence="3">
    <conflict type="erroneous initiation">
        <sequence resource="EMBL-CDS" id="AAL20409"/>
    </conflict>
</comment>
<evidence type="ECO:0000250" key="1"/>
<evidence type="ECO:0000255" key="2"/>
<evidence type="ECO:0000305" key="3"/>
<dbReference type="EMBL" id="AE006468">
    <property type="protein sequence ID" value="AAL20409.1"/>
    <property type="status" value="ALT_INIT"/>
    <property type="molecule type" value="Genomic_DNA"/>
</dbReference>
<dbReference type="RefSeq" id="NP_460450.3">
    <property type="nucleotide sequence ID" value="NC_003197.2"/>
</dbReference>
<dbReference type="SMR" id="Q8ZPK5"/>
<dbReference type="STRING" id="99287.STM1490"/>
<dbReference type="PaxDb" id="99287-STM1490"/>
<dbReference type="GeneID" id="1253008"/>
<dbReference type="KEGG" id="stm:STM1490"/>
<dbReference type="PATRIC" id="fig|99287.12.peg.1575"/>
<dbReference type="HOGENOM" id="CLU_015263_5_2_6"/>
<dbReference type="OMA" id="VIFVMEV"/>
<dbReference type="Proteomes" id="UP000001014">
    <property type="component" value="Chromosome"/>
</dbReference>
<dbReference type="GO" id="GO:0034707">
    <property type="term" value="C:chloride channel complex"/>
    <property type="evidence" value="ECO:0007669"/>
    <property type="project" value="UniProtKB-KW"/>
</dbReference>
<dbReference type="GO" id="GO:0005886">
    <property type="term" value="C:plasma membrane"/>
    <property type="evidence" value="ECO:0000318"/>
    <property type="project" value="GO_Central"/>
</dbReference>
<dbReference type="GO" id="GO:0005247">
    <property type="term" value="F:voltage-gated chloride channel activity"/>
    <property type="evidence" value="ECO:0007669"/>
    <property type="project" value="UniProtKB-UniRule"/>
</dbReference>
<dbReference type="GO" id="GO:0010447">
    <property type="term" value="P:response to acidic pH"/>
    <property type="evidence" value="ECO:0007669"/>
    <property type="project" value="InterPro"/>
</dbReference>
<dbReference type="CDD" id="cd00400">
    <property type="entry name" value="Voltage_gated_ClC"/>
    <property type="match status" value="1"/>
</dbReference>
<dbReference type="FunFam" id="1.10.3080.10:FF:000010">
    <property type="entry name" value="Voltage-gated ClC-type chloride channel ClcB"/>
    <property type="match status" value="1"/>
</dbReference>
<dbReference type="Gene3D" id="1.10.3080.10">
    <property type="entry name" value="Clc chloride channel"/>
    <property type="match status" value="1"/>
</dbReference>
<dbReference type="HAMAP" id="MF_01203">
    <property type="entry name" value="CLC_ClcB"/>
    <property type="match status" value="1"/>
</dbReference>
<dbReference type="InterPro" id="IPR014743">
    <property type="entry name" value="Cl-channel_core"/>
</dbReference>
<dbReference type="InterPro" id="IPR023790">
    <property type="entry name" value="Cl-channel_volt-gated_ClcB"/>
</dbReference>
<dbReference type="InterPro" id="IPR001807">
    <property type="entry name" value="ClC"/>
</dbReference>
<dbReference type="InterPro" id="IPR050368">
    <property type="entry name" value="ClC-type_chloride_channel"/>
</dbReference>
<dbReference type="NCBIfam" id="NF002437">
    <property type="entry name" value="PRK01610.1"/>
    <property type="match status" value="1"/>
</dbReference>
<dbReference type="PANTHER" id="PTHR43427">
    <property type="entry name" value="CHLORIDE CHANNEL PROTEIN CLC-E"/>
    <property type="match status" value="1"/>
</dbReference>
<dbReference type="PANTHER" id="PTHR43427:SF6">
    <property type="entry name" value="CHLORIDE CHANNEL PROTEIN CLC-E"/>
    <property type="match status" value="1"/>
</dbReference>
<dbReference type="Pfam" id="PF00654">
    <property type="entry name" value="Voltage_CLC"/>
    <property type="match status" value="1"/>
</dbReference>
<dbReference type="PRINTS" id="PR00762">
    <property type="entry name" value="CLCHANNEL"/>
</dbReference>
<dbReference type="SUPFAM" id="SSF81340">
    <property type="entry name" value="Clc chloride channel"/>
    <property type="match status" value="1"/>
</dbReference>
<feature type="chain" id="PRO_0000094489" description="Voltage-gated ClC-type chloride channel ClcB">
    <location>
        <begin position="1"/>
        <end position="417"/>
    </location>
</feature>
<feature type="topological domain" description="Cytoplasmic" evidence="2">
    <location>
        <begin position="1"/>
        <end position="4"/>
    </location>
</feature>
<feature type="transmembrane region" description="Helical" evidence="2">
    <location>
        <begin position="5"/>
        <end position="25"/>
    </location>
</feature>
<feature type="topological domain" description="Periplasmic" evidence="2">
    <location>
        <begin position="26"/>
        <end position="53"/>
    </location>
</feature>
<feature type="transmembrane region" description="Helical" evidence="2">
    <location>
        <begin position="54"/>
        <end position="74"/>
    </location>
</feature>
<feature type="topological domain" description="Cytoplasmic" evidence="2">
    <location>
        <begin position="75"/>
        <end position="145"/>
    </location>
</feature>
<feature type="transmembrane region" description="Helical" evidence="2">
    <location>
        <begin position="146"/>
        <end position="166"/>
    </location>
</feature>
<feature type="topological domain" description="Periplasmic" evidence="2">
    <location>
        <begin position="167"/>
        <end position="172"/>
    </location>
</feature>
<feature type="transmembrane region" description="Helical" evidence="2">
    <location>
        <begin position="173"/>
        <end position="195"/>
    </location>
</feature>
<feature type="topological domain" description="Cytoplasmic" evidence="2">
    <location>
        <begin position="196"/>
        <end position="221"/>
    </location>
</feature>
<feature type="transmembrane region" description="Helical" evidence="2">
    <location>
        <begin position="222"/>
        <end position="242"/>
    </location>
</feature>
<feature type="topological domain" description="Periplasmic" evidence="2">
    <location>
        <begin position="243"/>
        <end position="257"/>
    </location>
</feature>
<feature type="transmembrane region" description="Helical" evidence="2">
    <location>
        <begin position="258"/>
        <end position="278"/>
    </location>
</feature>
<feature type="topological domain" description="Cytoplasmic" evidence="2">
    <location>
        <begin position="279"/>
        <end position="287"/>
    </location>
</feature>
<feature type="transmembrane region" description="Helical" evidence="2">
    <location>
        <begin position="288"/>
        <end position="308"/>
    </location>
</feature>
<feature type="topological domain" description="Periplasmic" evidence="2">
    <location>
        <begin position="309"/>
        <end position="315"/>
    </location>
</feature>
<feature type="transmembrane region" description="Helical" evidence="2">
    <location>
        <begin position="316"/>
        <end position="336"/>
    </location>
</feature>
<feature type="topological domain" description="Cytoplasmic" evidence="2">
    <location>
        <begin position="337"/>
        <end position="348"/>
    </location>
</feature>
<feature type="transmembrane region" description="Helical" evidence="2">
    <location>
        <begin position="349"/>
        <end position="371"/>
    </location>
</feature>
<feature type="topological domain" description="Periplasmic" evidence="2">
    <location>
        <begin position="372"/>
        <end position="379"/>
    </location>
</feature>
<feature type="transmembrane region" description="Helical" evidence="2">
    <location>
        <begin position="380"/>
        <end position="400"/>
    </location>
</feature>
<feature type="topological domain" description="Cytoplasmic" evidence="2">
    <location>
        <begin position="401"/>
        <end position="417"/>
    </location>
</feature>
<proteinExistence type="inferred from homology"/>
<sequence>MFRRLLIATLIGILAALAVAAFRHAMQLLEWIFLSNDTGSLVNAAEGLSPWRRLITPALGGLAAGLLLWGWQKMNQQRPHAPTDYMEALQTDGQFDVGASLVKSLASLLVVVSGSAIGREGAMILLAALAASSFARRFTPREEWKLWIASGAAAGMAGAYHAPLAGSLFIAEILFGTLMLASLGPVVVSAVVALLTTHVLNGSDSLLYTVHLTVDLHAREYVMIVSTGLVAGLCGPLLMWLMTASHNSFLRLKLSPPWQLALGGLIVGLLSLLTPTVWGNGYSVVQSFLLSPPLFSLIGGIFVCKILAVLASSGSGAPGGVFTPTLFVGLSIGMFLGRIWGFWLPGSDEIAILLGLAGMATLLAATTHAPIMSTLMICEMTGEYQLLPGLLIACVVASVLSRTLRHDSIYRQHAAEH</sequence>
<organism>
    <name type="scientific">Salmonella typhimurium (strain LT2 / SGSC1412 / ATCC 700720)</name>
    <dbReference type="NCBI Taxonomy" id="99287"/>
    <lineage>
        <taxon>Bacteria</taxon>
        <taxon>Pseudomonadati</taxon>
        <taxon>Pseudomonadota</taxon>
        <taxon>Gammaproteobacteria</taxon>
        <taxon>Enterobacterales</taxon>
        <taxon>Enterobacteriaceae</taxon>
        <taxon>Salmonella</taxon>
    </lineage>
</organism>
<gene>
    <name type="primary">clcB</name>
    <name type="ordered locus">STM1490</name>
</gene>
<reference key="1">
    <citation type="journal article" date="2001" name="Nature">
        <title>Complete genome sequence of Salmonella enterica serovar Typhimurium LT2.</title>
        <authorList>
            <person name="McClelland M."/>
            <person name="Sanderson K.E."/>
            <person name="Spieth J."/>
            <person name="Clifton S.W."/>
            <person name="Latreille P."/>
            <person name="Courtney L."/>
            <person name="Porwollik S."/>
            <person name="Ali J."/>
            <person name="Dante M."/>
            <person name="Du F."/>
            <person name="Hou S."/>
            <person name="Layman D."/>
            <person name="Leonard S."/>
            <person name="Nguyen C."/>
            <person name="Scott K."/>
            <person name="Holmes A."/>
            <person name="Grewal N."/>
            <person name="Mulvaney E."/>
            <person name="Ryan E."/>
            <person name="Sun H."/>
            <person name="Florea L."/>
            <person name="Miller W."/>
            <person name="Stoneking T."/>
            <person name="Nhan M."/>
            <person name="Waterston R."/>
            <person name="Wilson R.K."/>
        </authorList>
    </citation>
    <scope>NUCLEOTIDE SEQUENCE [LARGE SCALE GENOMIC DNA]</scope>
    <source>
        <strain>LT2 / SGSC1412 / ATCC 700720</strain>
    </source>
</reference>